<comment type="function">
    <text evidence="1">May subvert the host innate immune response by interacting with host IL1B and interfering with its function.</text>
</comment>
<comment type="subunit">
    <text evidence="1">Interacts with host IL1B.</text>
</comment>
<comment type="subcellular location">
    <subcellularLocation>
        <location evidence="1">Host cytoplasm</location>
    </subcellularLocation>
</comment>
<comment type="induction">
    <text evidence="3">Expressed in the early phase of the viral replicative cycle.</text>
</comment>
<comment type="similarity">
    <text evidence="3">Belongs to the asfivirus L83L family.</text>
</comment>
<organismHost>
    <name type="scientific">Ornithodoros</name>
    <name type="common">relapsing fever ticks</name>
    <dbReference type="NCBI Taxonomy" id="6937"/>
</organismHost>
<organismHost>
    <name type="scientific">Phacochoerus aethiopicus</name>
    <name type="common">Warthog</name>
    <dbReference type="NCBI Taxonomy" id="85517"/>
</organismHost>
<organismHost>
    <name type="scientific">Phacochoerus africanus</name>
    <name type="common">Warthog</name>
    <dbReference type="NCBI Taxonomy" id="41426"/>
</organismHost>
<organismHost>
    <name type="scientific">Potamochoerus larvatus</name>
    <name type="common">Bushpig</name>
    <dbReference type="NCBI Taxonomy" id="273792"/>
</organismHost>
<organismHost>
    <name type="scientific">Sus scrofa</name>
    <name type="common">Pig</name>
    <dbReference type="NCBI Taxonomy" id="9823"/>
</organismHost>
<gene>
    <name type="ordered locus">Mal-003</name>
</gene>
<name>L83L_ASFM2</name>
<keyword id="KW-0244">Early protein</keyword>
<keyword id="KW-1035">Host cytoplasm</keyword>
<keyword id="KW-0945">Host-virus interaction</keyword>
<reference key="1">
    <citation type="submission" date="2003-03" db="EMBL/GenBank/DDBJ databases">
        <title>African swine fever virus genomes.</title>
        <authorList>
            <person name="Kutish G.F."/>
            <person name="Rock D.L."/>
        </authorList>
    </citation>
    <scope>NUCLEOTIDE SEQUENCE [LARGE SCALE GENOMIC DNA]</scope>
</reference>
<feature type="chain" id="PRO_0000373736" description="Protein L83L">
    <location>
        <begin position="1"/>
        <end position="83"/>
    </location>
</feature>
<feature type="region of interest" description="Disordered" evidence="2">
    <location>
        <begin position="1"/>
        <end position="25"/>
    </location>
</feature>
<feature type="compositionally biased region" description="Polar residues" evidence="2">
    <location>
        <begin position="1"/>
        <end position="10"/>
    </location>
</feature>
<feature type="compositionally biased region" description="Basic and acidic residues" evidence="2">
    <location>
        <begin position="14"/>
        <end position="25"/>
    </location>
</feature>
<protein>
    <recommendedName>
        <fullName>Protein L83L</fullName>
    </recommendedName>
</protein>
<accession>P0CAK7</accession>
<proteinExistence type="inferred from homology"/>
<dbReference type="EMBL" id="AY261361">
    <property type="status" value="NOT_ANNOTATED_CDS"/>
    <property type="molecule type" value="Genomic_DNA"/>
</dbReference>
<dbReference type="Proteomes" id="UP000000860">
    <property type="component" value="Segment"/>
</dbReference>
<dbReference type="GO" id="GO:0030430">
    <property type="term" value="C:host cell cytoplasm"/>
    <property type="evidence" value="ECO:0007669"/>
    <property type="project" value="UniProtKB-SubCell"/>
</dbReference>
<organism>
    <name type="scientific">African swine fever virus (isolate Tick/Malawi/Lil 20-1/1983)</name>
    <name type="common">ASFV</name>
    <dbReference type="NCBI Taxonomy" id="10500"/>
    <lineage>
        <taxon>Viruses</taxon>
        <taxon>Varidnaviria</taxon>
        <taxon>Bamfordvirae</taxon>
        <taxon>Nucleocytoviricota</taxon>
        <taxon>Pokkesviricetes</taxon>
        <taxon>Asfuvirales</taxon>
        <taxon>Asfarviridae</taxon>
        <taxon>Asfivirus</taxon>
        <taxon>African swine fever virus</taxon>
    </lineage>
</organism>
<evidence type="ECO:0000250" key="1">
    <source>
        <dbReference type="UniProtKB" id="Q65132"/>
    </source>
</evidence>
<evidence type="ECO:0000256" key="2">
    <source>
        <dbReference type="SAM" id="MobiDB-lite"/>
    </source>
</evidence>
<evidence type="ECO:0000305" key="3"/>
<sequence length="83" mass="9495">MDTSLKNNDGASEADNKNYQDYKDESGNINDVINAIKHNSMVDCCHKNYSTFSSEWYMNERKYDDIAEGPSPKKSVVHRCTII</sequence>